<feature type="chain" id="PRO_0000036257" description="Putative D-alanyl-D-alanine carboxypeptidase">
    <location>
        <begin position="1"/>
        <end position="434"/>
    </location>
</feature>
<feature type="transmembrane region" description="Helical; Signal-anchor" evidence="1">
    <location>
        <begin position="7"/>
        <end position="25"/>
    </location>
</feature>
<name>YFEW_ECO57</name>
<evidence type="ECO:0000255" key="1">
    <source>
        <dbReference type="HAMAP-Rule" id="MF_01034"/>
    </source>
</evidence>
<evidence type="ECO:0000305" key="2"/>
<protein>
    <recommendedName>
        <fullName evidence="1">Putative D-alanyl-D-alanine carboxypeptidase</fullName>
        <ecNumber evidence="1">3.4.16.4</ecNumber>
    </recommendedName>
    <alternativeName>
        <fullName evidence="1">DD-carboxypeptidase</fullName>
        <shortName evidence="1">DD-CPase</shortName>
    </alternativeName>
</protein>
<organism>
    <name type="scientific">Escherichia coli O157:H7</name>
    <dbReference type="NCBI Taxonomy" id="83334"/>
    <lineage>
        <taxon>Bacteria</taxon>
        <taxon>Pseudomonadati</taxon>
        <taxon>Pseudomonadota</taxon>
        <taxon>Gammaproteobacteria</taxon>
        <taxon>Enterobacterales</taxon>
        <taxon>Enterobacteriaceae</taxon>
        <taxon>Escherichia</taxon>
    </lineage>
</organism>
<proteinExistence type="inferred from homology"/>
<comment type="catalytic activity">
    <reaction evidence="1">
        <text>Preferential cleavage: (Ac)2-L-Lys-D-Ala-|-D-Ala. Also transpeptidation of peptidyl-alanyl moieties that are N-acyl substituents of D-alanine.</text>
        <dbReference type="EC" id="3.4.16.4"/>
    </reaction>
</comment>
<comment type="subcellular location">
    <subcellularLocation>
        <location evidence="1">Cell inner membrane</location>
        <topology evidence="1">Single-pass membrane protein</topology>
    </subcellularLocation>
</comment>
<comment type="similarity">
    <text evidence="1">Belongs to the peptidase S12 family. YfeW subfamily.</text>
</comment>
<comment type="sequence caution" evidence="2">
    <conflict type="erroneous initiation">
        <sequence resource="EMBL-CDS" id="AAG57548"/>
    </conflict>
</comment>
<sequence>MKRTMLYLSLLAVSCSVSAAKYPVLTESSPEKAGFNVERLNQMDRWISQQVDAGYPGVNLLIIKDNQIVYRKAWGAAKKYDGSVLMAQPVKATTGTLYDLASNTKMYATNFALQKLMSEGKLHPDDLIAKYISGFADSPNDTIKGKNTLRISDLLHHSGGFPADPQYPNKAVAGALYSQDKGQTLEMIKRTPLEYQPGSKHIYSDVDYMLLGFIVESVTGQPLDRYVEESIYRPLGLTHTVFNPLLKGFKPQQIAATELNGNTRDGVIHFPNIRTSTHWGQVHDEKAFYSMGGVSGHAGLFSNTGDIAVLMQTMLNGGGYGDVQLFSAETVKMFTTSSKEDATFGLGWRVNGNATMTPTFGTLASPQTYGHTGWTGTVTVIDPVNHMAIVMLSNKPHSPVADPQKNPNMFESGQLPIATYGWVVDQVYAALKQK</sequence>
<reference key="1">
    <citation type="journal article" date="2001" name="Nature">
        <title>Genome sequence of enterohaemorrhagic Escherichia coli O157:H7.</title>
        <authorList>
            <person name="Perna N.T."/>
            <person name="Plunkett G. III"/>
            <person name="Burland V."/>
            <person name="Mau B."/>
            <person name="Glasner J.D."/>
            <person name="Rose D.J."/>
            <person name="Mayhew G.F."/>
            <person name="Evans P.S."/>
            <person name="Gregor J."/>
            <person name="Kirkpatrick H.A."/>
            <person name="Posfai G."/>
            <person name="Hackett J."/>
            <person name="Klink S."/>
            <person name="Boutin A."/>
            <person name="Shao Y."/>
            <person name="Miller L."/>
            <person name="Grotbeck E.J."/>
            <person name="Davis N.W."/>
            <person name="Lim A."/>
            <person name="Dimalanta E.T."/>
            <person name="Potamousis K."/>
            <person name="Apodaca J."/>
            <person name="Anantharaman T.S."/>
            <person name="Lin J."/>
            <person name="Yen G."/>
            <person name="Schwartz D.C."/>
            <person name="Welch R.A."/>
            <person name="Blattner F.R."/>
        </authorList>
    </citation>
    <scope>NUCLEOTIDE SEQUENCE [LARGE SCALE GENOMIC DNA]</scope>
    <source>
        <strain>O157:H7 / EDL933 / ATCC 700927 / EHEC</strain>
    </source>
</reference>
<reference key="2">
    <citation type="journal article" date="2001" name="DNA Res.">
        <title>Complete genome sequence of enterohemorrhagic Escherichia coli O157:H7 and genomic comparison with a laboratory strain K-12.</title>
        <authorList>
            <person name="Hayashi T."/>
            <person name="Makino K."/>
            <person name="Ohnishi M."/>
            <person name="Kurokawa K."/>
            <person name="Ishii K."/>
            <person name="Yokoyama K."/>
            <person name="Han C.-G."/>
            <person name="Ohtsubo E."/>
            <person name="Nakayama K."/>
            <person name="Murata T."/>
            <person name="Tanaka M."/>
            <person name="Tobe T."/>
            <person name="Iida T."/>
            <person name="Takami H."/>
            <person name="Honda T."/>
            <person name="Sasakawa C."/>
            <person name="Ogasawara N."/>
            <person name="Yasunaga T."/>
            <person name="Kuhara S."/>
            <person name="Shiba T."/>
            <person name="Hattori M."/>
            <person name="Shinagawa H."/>
        </authorList>
    </citation>
    <scope>NUCLEOTIDE SEQUENCE [LARGE SCALE GENOMIC DNA]</scope>
    <source>
        <strain>O157:H7 / Sakai / RIMD 0509952 / EHEC</strain>
    </source>
</reference>
<dbReference type="EC" id="3.4.16.4" evidence="1"/>
<dbReference type="EMBL" id="AE005174">
    <property type="protein sequence ID" value="AAG57548.1"/>
    <property type="status" value="ALT_INIT"/>
    <property type="molecule type" value="Genomic_DNA"/>
</dbReference>
<dbReference type="EMBL" id="BA000007">
    <property type="protein sequence ID" value="BAB36724.1"/>
    <property type="molecule type" value="Genomic_DNA"/>
</dbReference>
<dbReference type="PIR" id="E91041">
    <property type="entry name" value="E91041"/>
</dbReference>
<dbReference type="PIR" id="H85885">
    <property type="entry name" value="H85885"/>
</dbReference>
<dbReference type="RefSeq" id="NP_311328.1">
    <property type="nucleotide sequence ID" value="NC_002695.1"/>
</dbReference>
<dbReference type="SMR" id="Q8XBJ0"/>
<dbReference type="STRING" id="155864.Z3695"/>
<dbReference type="MEROPS" id="S12.A03"/>
<dbReference type="GeneID" id="915366"/>
<dbReference type="KEGG" id="ece:Z3695"/>
<dbReference type="KEGG" id="ecs:ECs_3301"/>
<dbReference type="PATRIC" id="fig|386585.9.peg.3448"/>
<dbReference type="eggNOG" id="COG1680">
    <property type="taxonomic scope" value="Bacteria"/>
</dbReference>
<dbReference type="HOGENOM" id="CLU_020027_1_2_6"/>
<dbReference type="OMA" id="AGWAVRY"/>
<dbReference type="Proteomes" id="UP000000558">
    <property type="component" value="Chromosome"/>
</dbReference>
<dbReference type="Proteomes" id="UP000002519">
    <property type="component" value="Chromosome"/>
</dbReference>
<dbReference type="GO" id="GO:0005886">
    <property type="term" value="C:plasma membrane"/>
    <property type="evidence" value="ECO:0007669"/>
    <property type="project" value="UniProtKB-SubCell"/>
</dbReference>
<dbReference type="GO" id="GO:0009002">
    <property type="term" value="F:serine-type D-Ala-D-Ala carboxypeptidase activity"/>
    <property type="evidence" value="ECO:0007669"/>
    <property type="project" value="UniProtKB-UniRule"/>
</dbReference>
<dbReference type="GO" id="GO:0006508">
    <property type="term" value="P:proteolysis"/>
    <property type="evidence" value="ECO:0007669"/>
    <property type="project" value="UniProtKB-KW"/>
</dbReference>
<dbReference type="Gene3D" id="3.40.710.10">
    <property type="entry name" value="DD-peptidase/beta-lactamase superfamily"/>
    <property type="match status" value="1"/>
</dbReference>
<dbReference type="HAMAP" id="MF_01034">
    <property type="entry name" value="S12_YfeW"/>
    <property type="match status" value="1"/>
</dbReference>
<dbReference type="InterPro" id="IPR001466">
    <property type="entry name" value="Beta-lactam-related"/>
</dbReference>
<dbReference type="InterPro" id="IPR012338">
    <property type="entry name" value="Beta-lactam/transpept-like"/>
</dbReference>
<dbReference type="InterPro" id="IPR050789">
    <property type="entry name" value="Diverse_Enzym_Activities"/>
</dbReference>
<dbReference type="InterPro" id="IPR022849">
    <property type="entry name" value="Pept_S12_YfeW/YbbE-like"/>
</dbReference>
<dbReference type="NCBIfam" id="NF002968">
    <property type="entry name" value="PRK03642.1"/>
    <property type="match status" value="1"/>
</dbReference>
<dbReference type="PANTHER" id="PTHR43283">
    <property type="entry name" value="BETA-LACTAMASE-RELATED"/>
    <property type="match status" value="1"/>
</dbReference>
<dbReference type="PANTHER" id="PTHR43283:SF11">
    <property type="entry name" value="BETA-LACTAMASE-RELATED DOMAIN-CONTAINING PROTEIN"/>
    <property type="match status" value="1"/>
</dbReference>
<dbReference type="Pfam" id="PF00144">
    <property type="entry name" value="Beta-lactamase"/>
    <property type="match status" value="1"/>
</dbReference>
<dbReference type="SUPFAM" id="SSF56601">
    <property type="entry name" value="beta-lactamase/transpeptidase-like"/>
    <property type="match status" value="1"/>
</dbReference>
<dbReference type="PROSITE" id="PS51257">
    <property type="entry name" value="PROKAR_LIPOPROTEIN"/>
    <property type="match status" value="1"/>
</dbReference>
<gene>
    <name evidence="1" type="primary">yfeW</name>
    <name type="ordered locus">Z3695</name>
    <name type="ordered locus">ECs3301</name>
</gene>
<accession>Q8XBJ0</accession>
<keyword id="KW-0121">Carboxypeptidase</keyword>
<keyword id="KW-0997">Cell inner membrane</keyword>
<keyword id="KW-1003">Cell membrane</keyword>
<keyword id="KW-0378">Hydrolase</keyword>
<keyword id="KW-0472">Membrane</keyword>
<keyword id="KW-0645">Protease</keyword>
<keyword id="KW-1185">Reference proteome</keyword>
<keyword id="KW-0812">Transmembrane</keyword>
<keyword id="KW-1133">Transmembrane helix</keyword>